<name>RS11_PSEPW</name>
<keyword id="KW-0687">Ribonucleoprotein</keyword>
<keyword id="KW-0689">Ribosomal protein</keyword>
<keyword id="KW-0694">RNA-binding</keyword>
<keyword id="KW-0699">rRNA-binding</keyword>
<comment type="function">
    <text evidence="1">Located on the platform of the 30S subunit, it bridges several disparate RNA helices of the 16S rRNA. Forms part of the Shine-Dalgarno cleft in the 70S ribosome.</text>
</comment>
<comment type="subunit">
    <text evidence="1">Part of the 30S ribosomal subunit. Interacts with proteins S7 and S18. Binds to IF-3.</text>
</comment>
<comment type="similarity">
    <text evidence="1">Belongs to the universal ribosomal protein uS11 family.</text>
</comment>
<gene>
    <name evidence="1" type="primary">rpsK</name>
    <name type="ordered locus">PputW619_4726</name>
</gene>
<protein>
    <recommendedName>
        <fullName evidence="1">Small ribosomal subunit protein uS11</fullName>
    </recommendedName>
    <alternativeName>
        <fullName evidence="2">30S ribosomal protein S11</fullName>
    </alternativeName>
</protein>
<organism>
    <name type="scientific">Pseudomonas putida (strain W619)</name>
    <dbReference type="NCBI Taxonomy" id="390235"/>
    <lineage>
        <taxon>Bacteria</taxon>
        <taxon>Pseudomonadati</taxon>
        <taxon>Pseudomonadota</taxon>
        <taxon>Gammaproteobacteria</taxon>
        <taxon>Pseudomonadales</taxon>
        <taxon>Pseudomonadaceae</taxon>
        <taxon>Pseudomonas</taxon>
    </lineage>
</organism>
<dbReference type="EMBL" id="CP000949">
    <property type="protein sequence ID" value="ACA75202.1"/>
    <property type="molecule type" value="Genomic_DNA"/>
</dbReference>
<dbReference type="SMR" id="B1JAI9"/>
<dbReference type="STRING" id="390235.PputW619_4726"/>
<dbReference type="KEGG" id="ppw:PputW619_4726"/>
<dbReference type="eggNOG" id="COG0100">
    <property type="taxonomic scope" value="Bacteria"/>
</dbReference>
<dbReference type="HOGENOM" id="CLU_072439_5_0_6"/>
<dbReference type="OrthoDB" id="9806415at2"/>
<dbReference type="GO" id="GO:1990904">
    <property type="term" value="C:ribonucleoprotein complex"/>
    <property type="evidence" value="ECO:0007669"/>
    <property type="project" value="UniProtKB-KW"/>
</dbReference>
<dbReference type="GO" id="GO:0005840">
    <property type="term" value="C:ribosome"/>
    <property type="evidence" value="ECO:0007669"/>
    <property type="project" value="UniProtKB-KW"/>
</dbReference>
<dbReference type="GO" id="GO:0019843">
    <property type="term" value="F:rRNA binding"/>
    <property type="evidence" value="ECO:0007669"/>
    <property type="project" value="UniProtKB-UniRule"/>
</dbReference>
<dbReference type="GO" id="GO:0003735">
    <property type="term" value="F:structural constituent of ribosome"/>
    <property type="evidence" value="ECO:0007669"/>
    <property type="project" value="InterPro"/>
</dbReference>
<dbReference type="GO" id="GO:0006412">
    <property type="term" value="P:translation"/>
    <property type="evidence" value="ECO:0007669"/>
    <property type="project" value="UniProtKB-UniRule"/>
</dbReference>
<dbReference type="FunFam" id="3.30.420.80:FF:000001">
    <property type="entry name" value="30S ribosomal protein S11"/>
    <property type="match status" value="1"/>
</dbReference>
<dbReference type="Gene3D" id="3.30.420.80">
    <property type="entry name" value="Ribosomal protein S11"/>
    <property type="match status" value="1"/>
</dbReference>
<dbReference type="HAMAP" id="MF_01310">
    <property type="entry name" value="Ribosomal_uS11"/>
    <property type="match status" value="1"/>
</dbReference>
<dbReference type="InterPro" id="IPR001971">
    <property type="entry name" value="Ribosomal_uS11"/>
</dbReference>
<dbReference type="InterPro" id="IPR019981">
    <property type="entry name" value="Ribosomal_uS11_bac-type"/>
</dbReference>
<dbReference type="InterPro" id="IPR018102">
    <property type="entry name" value="Ribosomal_uS11_CS"/>
</dbReference>
<dbReference type="InterPro" id="IPR036967">
    <property type="entry name" value="Ribosomal_uS11_sf"/>
</dbReference>
<dbReference type="NCBIfam" id="NF003698">
    <property type="entry name" value="PRK05309.1"/>
    <property type="match status" value="1"/>
</dbReference>
<dbReference type="NCBIfam" id="TIGR03632">
    <property type="entry name" value="uS11_bact"/>
    <property type="match status" value="1"/>
</dbReference>
<dbReference type="PANTHER" id="PTHR11759">
    <property type="entry name" value="40S RIBOSOMAL PROTEIN S14/30S RIBOSOMAL PROTEIN S11"/>
    <property type="match status" value="1"/>
</dbReference>
<dbReference type="Pfam" id="PF00411">
    <property type="entry name" value="Ribosomal_S11"/>
    <property type="match status" value="1"/>
</dbReference>
<dbReference type="PIRSF" id="PIRSF002131">
    <property type="entry name" value="Ribosomal_S11"/>
    <property type="match status" value="1"/>
</dbReference>
<dbReference type="SUPFAM" id="SSF53137">
    <property type="entry name" value="Translational machinery components"/>
    <property type="match status" value="1"/>
</dbReference>
<dbReference type="PROSITE" id="PS00054">
    <property type="entry name" value="RIBOSOMAL_S11"/>
    <property type="match status" value="1"/>
</dbReference>
<evidence type="ECO:0000255" key="1">
    <source>
        <dbReference type="HAMAP-Rule" id="MF_01310"/>
    </source>
</evidence>
<evidence type="ECO:0000305" key="2"/>
<sequence>MAKPAARPRKKVKKTVVDGIAHIHASFNNTIVTITDRQGNALSWATSGGSGFRGSRKSTPFAAQIAAERAGQAALEYGLKNLDVNVKGPGPGRESAVRALNSCGYKIASITDVTPIPHNGCRPPKKRRV</sequence>
<feature type="chain" id="PRO_1000141128" description="Small ribosomal subunit protein uS11">
    <location>
        <begin position="1"/>
        <end position="129"/>
    </location>
</feature>
<proteinExistence type="inferred from homology"/>
<reference key="1">
    <citation type="submission" date="2008-02" db="EMBL/GenBank/DDBJ databases">
        <title>Complete sequence of Pseudomonas putida W619.</title>
        <authorList>
            <person name="Copeland A."/>
            <person name="Lucas S."/>
            <person name="Lapidus A."/>
            <person name="Barry K."/>
            <person name="Detter J.C."/>
            <person name="Glavina del Rio T."/>
            <person name="Dalin E."/>
            <person name="Tice H."/>
            <person name="Pitluck S."/>
            <person name="Chain P."/>
            <person name="Malfatti S."/>
            <person name="Shin M."/>
            <person name="Vergez L."/>
            <person name="Schmutz J."/>
            <person name="Larimer F."/>
            <person name="Land M."/>
            <person name="Hauser L."/>
            <person name="Kyrpides N."/>
            <person name="Kim E."/>
            <person name="Taghavi S."/>
            <person name="Vangronsveld D."/>
            <person name="van der Lelie D."/>
            <person name="Richardson P."/>
        </authorList>
    </citation>
    <scope>NUCLEOTIDE SEQUENCE [LARGE SCALE GENOMIC DNA]</scope>
    <source>
        <strain>W619</strain>
    </source>
</reference>
<accession>B1JAI9</accession>